<evidence type="ECO:0000250" key="1"/>
<evidence type="ECO:0000255" key="2"/>
<evidence type="ECO:0000256" key="3">
    <source>
        <dbReference type="SAM" id="MobiDB-lite"/>
    </source>
</evidence>
<evidence type="ECO:0000305" key="4"/>
<accession>A1CHE9</accession>
<protein>
    <recommendedName>
        <fullName>Mediator of RNA polymerase II transcription subunit 8</fullName>
    </recommendedName>
    <alternativeName>
        <fullName>Mediator complex subunit 8</fullName>
    </alternativeName>
</protein>
<name>MED8_ASPCL</name>
<comment type="function">
    <text evidence="1">Component of the Mediator complex, a coactivator involved in the regulated transcription of nearly all RNA polymerase II-dependent genes. Mediator functions as a bridge to convey information from gene-specific regulatory proteins to the basal RNA polymerase II transcription machinery. Mediator is recruited to promoters by direct interactions with regulatory proteins and serves as a scaffold for the assembly of a functional preinitiation complex with RNA polymerase II and the general transcription factors (By similarity).</text>
</comment>
<comment type="subunit">
    <text evidence="1">Component of the Mediator complex.</text>
</comment>
<comment type="subcellular location">
    <subcellularLocation>
        <location evidence="4">Nucleus</location>
    </subcellularLocation>
</comment>
<comment type="similarity">
    <text evidence="4">Belongs to the Mediator complex subunit 8 family.</text>
</comment>
<gene>
    <name type="primary">med8</name>
    <name type="ORF">ACLA_047730</name>
</gene>
<sequence>MASPSQDQIKVLEQSRQRLVQLTRSLGSLIGSLNQSDPLPSWSSLQSQASIISNNLLSVSEHLSDNCDLLSALVAYPGPEYPGRTQASTLEQLLRTKLDPRIEDWVARGRRAGASALEDKDALSETELAELWDWAPVEANQEARRRNWGGDYTLEEREMGIQNVVTGLRRQLEDDERDEDEDEDDEEEEEGEGEDEEMEVVGVRRRSDAGAGLGFDTAVPTPASSQQVQKGAGPVVPLDDVLRFMTTGTLPQQR</sequence>
<dbReference type="EMBL" id="DS027054">
    <property type="protein sequence ID" value="EAW10304.1"/>
    <property type="molecule type" value="Genomic_DNA"/>
</dbReference>
<dbReference type="RefSeq" id="XP_001271730.1">
    <property type="nucleotide sequence ID" value="XM_001271729.1"/>
</dbReference>
<dbReference type="SMR" id="A1CHE9"/>
<dbReference type="STRING" id="344612.A1CHE9"/>
<dbReference type="EnsemblFungi" id="EAW10304">
    <property type="protein sequence ID" value="EAW10304"/>
    <property type="gene ID" value="ACLA_047730"/>
</dbReference>
<dbReference type="GeneID" id="4704270"/>
<dbReference type="KEGG" id="act:ACLA_047730"/>
<dbReference type="VEuPathDB" id="FungiDB:ACLA_047730"/>
<dbReference type="eggNOG" id="ENOG502S8U1">
    <property type="taxonomic scope" value="Eukaryota"/>
</dbReference>
<dbReference type="HOGENOM" id="CLU_074399_1_0_1"/>
<dbReference type="OMA" id="WAPIEAN"/>
<dbReference type="OrthoDB" id="5329317at2759"/>
<dbReference type="Proteomes" id="UP000006701">
    <property type="component" value="Unassembled WGS sequence"/>
</dbReference>
<dbReference type="GO" id="GO:0070847">
    <property type="term" value="C:core mediator complex"/>
    <property type="evidence" value="ECO:0007669"/>
    <property type="project" value="TreeGrafter"/>
</dbReference>
<dbReference type="GO" id="GO:0016592">
    <property type="term" value="C:mediator complex"/>
    <property type="evidence" value="ECO:0007669"/>
    <property type="project" value="InterPro"/>
</dbReference>
<dbReference type="GO" id="GO:0000978">
    <property type="term" value="F:RNA polymerase II cis-regulatory region sequence-specific DNA binding"/>
    <property type="evidence" value="ECO:0007669"/>
    <property type="project" value="TreeGrafter"/>
</dbReference>
<dbReference type="GO" id="GO:0003712">
    <property type="term" value="F:transcription coregulator activity"/>
    <property type="evidence" value="ECO:0007669"/>
    <property type="project" value="InterPro"/>
</dbReference>
<dbReference type="GO" id="GO:0006357">
    <property type="term" value="P:regulation of transcription by RNA polymerase II"/>
    <property type="evidence" value="ECO:0007669"/>
    <property type="project" value="InterPro"/>
</dbReference>
<dbReference type="FunFam" id="1.20.58.1710:FF:000002">
    <property type="entry name" value="Mediator of RNA polymerase II transcription subunit 8"/>
    <property type="match status" value="1"/>
</dbReference>
<dbReference type="Gene3D" id="1.20.58.1710">
    <property type="match status" value="1"/>
</dbReference>
<dbReference type="Gene3D" id="6.10.250.2610">
    <property type="match status" value="1"/>
</dbReference>
<dbReference type="InterPro" id="IPR019364">
    <property type="entry name" value="Mediatior_Med8_fun/met"/>
</dbReference>
<dbReference type="PANTHER" id="PTHR13074">
    <property type="entry name" value="MEDIATOR OF RNA POLYMERASE II TRANSCRIPTION SUBUNIT 8"/>
    <property type="match status" value="1"/>
</dbReference>
<dbReference type="PANTHER" id="PTHR13074:SF9">
    <property type="entry name" value="MEDIATOR OF RNA POLYMERASE II TRANSCRIPTION SUBUNIT 8"/>
    <property type="match status" value="1"/>
</dbReference>
<dbReference type="Pfam" id="PF10232">
    <property type="entry name" value="Med8"/>
    <property type="match status" value="1"/>
</dbReference>
<proteinExistence type="inferred from homology"/>
<reference key="1">
    <citation type="journal article" date="2008" name="PLoS Genet.">
        <title>Genomic islands in the pathogenic filamentous fungus Aspergillus fumigatus.</title>
        <authorList>
            <person name="Fedorova N.D."/>
            <person name="Khaldi N."/>
            <person name="Joardar V.S."/>
            <person name="Maiti R."/>
            <person name="Amedeo P."/>
            <person name="Anderson M.J."/>
            <person name="Crabtree J."/>
            <person name="Silva J.C."/>
            <person name="Badger J.H."/>
            <person name="Albarraq A."/>
            <person name="Angiuoli S."/>
            <person name="Bussey H."/>
            <person name="Bowyer P."/>
            <person name="Cotty P.J."/>
            <person name="Dyer P.S."/>
            <person name="Egan A."/>
            <person name="Galens K."/>
            <person name="Fraser-Liggett C.M."/>
            <person name="Haas B.J."/>
            <person name="Inman J.M."/>
            <person name="Kent R."/>
            <person name="Lemieux S."/>
            <person name="Malavazi I."/>
            <person name="Orvis J."/>
            <person name="Roemer T."/>
            <person name="Ronning C.M."/>
            <person name="Sundaram J.P."/>
            <person name="Sutton G."/>
            <person name="Turner G."/>
            <person name="Venter J.C."/>
            <person name="White O.R."/>
            <person name="Whitty B.R."/>
            <person name="Youngman P."/>
            <person name="Wolfe K.H."/>
            <person name="Goldman G.H."/>
            <person name="Wortman J.R."/>
            <person name="Jiang B."/>
            <person name="Denning D.W."/>
            <person name="Nierman W.C."/>
        </authorList>
    </citation>
    <scope>NUCLEOTIDE SEQUENCE [LARGE SCALE GENOMIC DNA]</scope>
    <source>
        <strain>ATCC 1007 / CBS 513.65 / DSM 816 / NCTC 3887 / NRRL 1 / QM 1276 / 107</strain>
    </source>
</reference>
<organism>
    <name type="scientific">Aspergillus clavatus (strain ATCC 1007 / CBS 513.65 / DSM 816 / NCTC 3887 / NRRL 1 / QM 1276 / 107)</name>
    <dbReference type="NCBI Taxonomy" id="344612"/>
    <lineage>
        <taxon>Eukaryota</taxon>
        <taxon>Fungi</taxon>
        <taxon>Dikarya</taxon>
        <taxon>Ascomycota</taxon>
        <taxon>Pezizomycotina</taxon>
        <taxon>Eurotiomycetes</taxon>
        <taxon>Eurotiomycetidae</taxon>
        <taxon>Eurotiales</taxon>
        <taxon>Aspergillaceae</taxon>
        <taxon>Aspergillus</taxon>
        <taxon>Aspergillus subgen. Fumigati</taxon>
    </lineage>
</organism>
<keyword id="KW-0010">Activator</keyword>
<keyword id="KW-0175">Coiled coil</keyword>
<keyword id="KW-0539">Nucleus</keyword>
<keyword id="KW-1185">Reference proteome</keyword>
<keyword id="KW-0804">Transcription</keyword>
<keyword id="KW-0805">Transcription regulation</keyword>
<feature type="chain" id="PRO_0000304534" description="Mediator of RNA polymerase II transcription subunit 8">
    <location>
        <begin position="1"/>
        <end position="254"/>
    </location>
</feature>
<feature type="region of interest" description="Disordered" evidence="3">
    <location>
        <begin position="167"/>
        <end position="234"/>
    </location>
</feature>
<feature type="coiled-coil region" evidence="2">
    <location>
        <begin position="154"/>
        <end position="190"/>
    </location>
</feature>
<feature type="compositionally biased region" description="Acidic residues" evidence="3">
    <location>
        <begin position="173"/>
        <end position="199"/>
    </location>
</feature>